<gene>
    <name evidence="1" type="primary">aroC</name>
    <name type="ordered locus">EF_1564</name>
</gene>
<reference key="1">
    <citation type="journal article" date="2003" name="Science">
        <title>Role of mobile DNA in the evolution of vancomycin-resistant Enterococcus faecalis.</title>
        <authorList>
            <person name="Paulsen I.T."/>
            <person name="Banerjei L."/>
            <person name="Myers G.S.A."/>
            <person name="Nelson K.E."/>
            <person name="Seshadri R."/>
            <person name="Read T.D."/>
            <person name="Fouts D.E."/>
            <person name="Eisen J.A."/>
            <person name="Gill S.R."/>
            <person name="Heidelberg J.F."/>
            <person name="Tettelin H."/>
            <person name="Dodson R.J."/>
            <person name="Umayam L.A."/>
            <person name="Brinkac L.M."/>
            <person name="Beanan M.J."/>
            <person name="Daugherty S.C."/>
            <person name="DeBoy R.T."/>
            <person name="Durkin S.A."/>
            <person name="Kolonay J.F."/>
            <person name="Madupu R."/>
            <person name="Nelson W.C."/>
            <person name="Vamathevan J.J."/>
            <person name="Tran B."/>
            <person name="Upton J."/>
            <person name="Hansen T."/>
            <person name="Shetty J."/>
            <person name="Khouri H.M."/>
            <person name="Utterback T.R."/>
            <person name="Radune D."/>
            <person name="Ketchum K.A."/>
            <person name="Dougherty B.A."/>
            <person name="Fraser C.M."/>
        </authorList>
    </citation>
    <scope>NUCLEOTIDE SEQUENCE [LARGE SCALE GENOMIC DNA]</scope>
    <source>
        <strain>ATCC 700802 / V583</strain>
    </source>
</reference>
<proteinExistence type="inferred from homology"/>
<protein>
    <recommendedName>
        <fullName evidence="1">Chorismate synthase</fullName>
        <shortName evidence="1">CS</shortName>
        <ecNumber evidence="1">4.2.3.5</ecNumber>
    </recommendedName>
    <alternativeName>
        <fullName evidence="1">5-enolpyruvylshikimate-3-phosphate phospholyase</fullName>
    </alternativeName>
</protein>
<evidence type="ECO:0000255" key="1">
    <source>
        <dbReference type="HAMAP-Rule" id="MF_00300"/>
    </source>
</evidence>
<evidence type="ECO:0000256" key="2">
    <source>
        <dbReference type="SAM" id="MobiDB-lite"/>
    </source>
</evidence>
<feature type="chain" id="PRO_0000140587" description="Chorismate synthase">
    <location>
        <begin position="1"/>
        <end position="388"/>
    </location>
</feature>
<feature type="region of interest" description="Disordered" evidence="2">
    <location>
        <begin position="95"/>
        <end position="115"/>
    </location>
</feature>
<feature type="compositionally biased region" description="Basic residues" evidence="2">
    <location>
        <begin position="98"/>
        <end position="108"/>
    </location>
</feature>
<feature type="binding site" evidence="1">
    <location>
        <position position="39"/>
    </location>
    <ligand>
        <name>NADP(+)</name>
        <dbReference type="ChEBI" id="CHEBI:58349"/>
    </ligand>
</feature>
<feature type="binding site" evidence="1">
    <location>
        <position position="45"/>
    </location>
    <ligand>
        <name>NADP(+)</name>
        <dbReference type="ChEBI" id="CHEBI:58349"/>
    </ligand>
</feature>
<feature type="binding site" evidence="1">
    <location>
        <begin position="130"/>
        <end position="132"/>
    </location>
    <ligand>
        <name>FMN</name>
        <dbReference type="ChEBI" id="CHEBI:58210"/>
    </ligand>
</feature>
<feature type="binding site" evidence="1">
    <location>
        <begin position="251"/>
        <end position="252"/>
    </location>
    <ligand>
        <name>FMN</name>
        <dbReference type="ChEBI" id="CHEBI:58210"/>
    </ligand>
</feature>
<feature type="binding site" evidence="1">
    <location>
        <position position="296"/>
    </location>
    <ligand>
        <name>FMN</name>
        <dbReference type="ChEBI" id="CHEBI:58210"/>
    </ligand>
</feature>
<feature type="binding site" evidence="1">
    <location>
        <begin position="311"/>
        <end position="315"/>
    </location>
    <ligand>
        <name>FMN</name>
        <dbReference type="ChEBI" id="CHEBI:58210"/>
    </ligand>
</feature>
<feature type="binding site" evidence="1">
    <location>
        <position position="337"/>
    </location>
    <ligand>
        <name>FMN</name>
        <dbReference type="ChEBI" id="CHEBI:58210"/>
    </ligand>
</feature>
<comment type="function">
    <text evidence="1">Catalyzes the anti-1,4-elimination of the C-3 phosphate and the C-6 proR hydrogen from 5-enolpyruvylshikimate-3-phosphate (EPSP) to yield chorismate, which is the branch point compound that serves as the starting substrate for the three terminal pathways of aromatic amino acid biosynthesis. This reaction introduces a second double bond into the aromatic ring system.</text>
</comment>
<comment type="catalytic activity">
    <reaction evidence="1">
        <text>5-O-(1-carboxyvinyl)-3-phosphoshikimate = chorismate + phosphate</text>
        <dbReference type="Rhea" id="RHEA:21020"/>
        <dbReference type="ChEBI" id="CHEBI:29748"/>
        <dbReference type="ChEBI" id="CHEBI:43474"/>
        <dbReference type="ChEBI" id="CHEBI:57701"/>
        <dbReference type="EC" id="4.2.3.5"/>
    </reaction>
</comment>
<comment type="cofactor">
    <cofactor evidence="1">
        <name>FMNH2</name>
        <dbReference type="ChEBI" id="CHEBI:57618"/>
    </cofactor>
    <text evidence="1">Reduced FMN (FMNH(2)).</text>
</comment>
<comment type="pathway">
    <text evidence="1">Metabolic intermediate biosynthesis; chorismate biosynthesis; chorismate from D-erythrose 4-phosphate and phosphoenolpyruvate: step 7/7.</text>
</comment>
<comment type="subunit">
    <text evidence="1">Homotetramer.</text>
</comment>
<comment type="similarity">
    <text evidence="1">Belongs to the chorismate synthase family.</text>
</comment>
<name>AROC_ENTFA</name>
<sequence length="388" mass="42460">MRFITAGESHGPELTAIIEGLPAGLPLSSEEINRELARRQGGYGRGGRMKIEKDQVRITSGIRHGKTLGSPVTLIVENKDWKNWTSVMSVEPVPEKQKKIRRVSKPRPGHADLVGGMKYQHDDLRNVLERSSARETTMRVAIGAVAKKLLAELDIQVAGHVAVLGGIEATIPENLTIREIQERSEQSAVRVLDPSVEEKMKELIDQTKKNGDTIGGVVEVLVGGVPAGLGSYVQWDRKLDAKIAQAVVSINAFKGAEFGIGFEMAQRPGSQVMDEIVWDESTGYTRTSNNLGGFEGGMTNGMPIIVRGVMKPIPTLYKPLQSVNIDTKEPYKASVERSDSTAVPAASVVCEAVVATEVAKAMLEKFDSDSFEQMKEAVKRYRLYTQNF</sequence>
<organism>
    <name type="scientific">Enterococcus faecalis (strain ATCC 700802 / V583)</name>
    <dbReference type="NCBI Taxonomy" id="226185"/>
    <lineage>
        <taxon>Bacteria</taxon>
        <taxon>Bacillati</taxon>
        <taxon>Bacillota</taxon>
        <taxon>Bacilli</taxon>
        <taxon>Lactobacillales</taxon>
        <taxon>Enterococcaceae</taxon>
        <taxon>Enterococcus</taxon>
    </lineage>
</organism>
<keyword id="KW-0028">Amino-acid biosynthesis</keyword>
<keyword id="KW-0057">Aromatic amino acid biosynthesis</keyword>
<keyword id="KW-0274">FAD</keyword>
<keyword id="KW-0285">Flavoprotein</keyword>
<keyword id="KW-0288">FMN</keyword>
<keyword id="KW-0456">Lyase</keyword>
<keyword id="KW-0521">NADP</keyword>
<keyword id="KW-1185">Reference proteome</keyword>
<accession>Q834S2</accession>
<dbReference type="EC" id="4.2.3.5" evidence="1"/>
<dbReference type="EMBL" id="AE016830">
    <property type="protein sequence ID" value="AAO81351.1"/>
    <property type="molecule type" value="Genomic_DNA"/>
</dbReference>
<dbReference type="RefSeq" id="NP_815281.1">
    <property type="nucleotide sequence ID" value="NC_004668.1"/>
</dbReference>
<dbReference type="RefSeq" id="WP_002357582.1">
    <property type="nucleotide sequence ID" value="NZ_KE136528.1"/>
</dbReference>
<dbReference type="SMR" id="Q834S2"/>
<dbReference type="STRING" id="226185.EF_1564"/>
<dbReference type="EnsemblBacteria" id="AAO81351">
    <property type="protein sequence ID" value="AAO81351"/>
    <property type="gene ID" value="EF_1564"/>
</dbReference>
<dbReference type="KEGG" id="efa:EF1564"/>
<dbReference type="PATRIC" id="fig|226185.45.peg.1941"/>
<dbReference type="eggNOG" id="COG0082">
    <property type="taxonomic scope" value="Bacteria"/>
</dbReference>
<dbReference type="HOGENOM" id="CLU_034547_2_0_9"/>
<dbReference type="UniPathway" id="UPA00053">
    <property type="reaction ID" value="UER00090"/>
</dbReference>
<dbReference type="Proteomes" id="UP000001415">
    <property type="component" value="Chromosome"/>
</dbReference>
<dbReference type="GO" id="GO:0005829">
    <property type="term" value="C:cytosol"/>
    <property type="evidence" value="ECO:0007669"/>
    <property type="project" value="TreeGrafter"/>
</dbReference>
<dbReference type="GO" id="GO:0004107">
    <property type="term" value="F:chorismate synthase activity"/>
    <property type="evidence" value="ECO:0007669"/>
    <property type="project" value="UniProtKB-UniRule"/>
</dbReference>
<dbReference type="GO" id="GO:0010181">
    <property type="term" value="F:FMN binding"/>
    <property type="evidence" value="ECO:0007669"/>
    <property type="project" value="TreeGrafter"/>
</dbReference>
<dbReference type="GO" id="GO:0008652">
    <property type="term" value="P:amino acid biosynthetic process"/>
    <property type="evidence" value="ECO:0007669"/>
    <property type="project" value="UniProtKB-KW"/>
</dbReference>
<dbReference type="GO" id="GO:0009073">
    <property type="term" value="P:aromatic amino acid family biosynthetic process"/>
    <property type="evidence" value="ECO:0007669"/>
    <property type="project" value="UniProtKB-KW"/>
</dbReference>
<dbReference type="GO" id="GO:0009423">
    <property type="term" value="P:chorismate biosynthetic process"/>
    <property type="evidence" value="ECO:0007669"/>
    <property type="project" value="UniProtKB-UniRule"/>
</dbReference>
<dbReference type="CDD" id="cd07304">
    <property type="entry name" value="Chorismate_synthase"/>
    <property type="match status" value="1"/>
</dbReference>
<dbReference type="FunFam" id="3.60.150.10:FF:000002">
    <property type="entry name" value="Chorismate synthase"/>
    <property type="match status" value="1"/>
</dbReference>
<dbReference type="Gene3D" id="3.60.150.10">
    <property type="entry name" value="Chorismate synthase AroC"/>
    <property type="match status" value="1"/>
</dbReference>
<dbReference type="HAMAP" id="MF_00300">
    <property type="entry name" value="Chorismate_synth"/>
    <property type="match status" value="1"/>
</dbReference>
<dbReference type="InterPro" id="IPR000453">
    <property type="entry name" value="Chorismate_synth"/>
</dbReference>
<dbReference type="InterPro" id="IPR035904">
    <property type="entry name" value="Chorismate_synth_AroC_sf"/>
</dbReference>
<dbReference type="InterPro" id="IPR020541">
    <property type="entry name" value="Chorismate_synthase_CS"/>
</dbReference>
<dbReference type="NCBIfam" id="TIGR00033">
    <property type="entry name" value="aroC"/>
    <property type="match status" value="1"/>
</dbReference>
<dbReference type="NCBIfam" id="NF003793">
    <property type="entry name" value="PRK05382.1"/>
    <property type="match status" value="1"/>
</dbReference>
<dbReference type="PANTHER" id="PTHR21085">
    <property type="entry name" value="CHORISMATE SYNTHASE"/>
    <property type="match status" value="1"/>
</dbReference>
<dbReference type="PANTHER" id="PTHR21085:SF0">
    <property type="entry name" value="CHORISMATE SYNTHASE"/>
    <property type="match status" value="1"/>
</dbReference>
<dbReference type="Pfam" id="PF01264">
    <property type="entry name" value="Chorismate_synt"/>
    <property type="match status" value="1"/>
</dbReference>
<dbReference type="PIRSF" id="PIRSF001456">
    <property type="entry name" value="Chorismate_synth"/>
    <property type="match status" value="1"/>
</dbReference>
<dbReference type="SUPFAM" id="SSF103263">
    <property type="entry name" value="Chorismate synthase, AroC"/>
    <property type="match status" value="1"/>
</dbReference>
<dbReference type="PROSITE" id="PS00787">
    <property type="entry name" value="CHORISMATE_SYNTHASE_1"/>
    <property type="match status" value="1"/>
</dbReference>
<dbReference type="PROSITE" id="PS00788">
    <property type="entry name" value="CHORISMATE_SYNTHASE_2"/>
    <property type="match status" value="1"/>
</dbReference>
<dbReference type="PROSITE" id="PS00789">
    <property type="entry name" value="CHORISMATE_SYNTHASE_3"/>
    <property type="match status" value="1"/>
</dbReference>